<reference key="1">
    <citation type="journal article" date="1990" name="J. Clin. Invest.">
        <title>Maple syrup urine disease. Complete primary structure of the E1 beta subunit of human branched chain alpha-ketoacid dehydrogenase complex deduced from the nucleotide sequence and a gene analysis of patients with this disease.</title>
        <authorList>
            <person name="Matsuda I."/>
            <person name="Asaka J."/>
            <person name="Akaboshi I."/>
            <person name="Endo F."/>
            <person name="Mitsubuchi H."/>
            <person name="Nobukuni Y."/>
        </authorList>
    </citation>
    <scope>NUCLEOTIDE SEQUENCE [MRNA] (ISOFORM 1)</scope>
</reference>
<reference key="2">
    <citation type="journal article" date="1996" name="Am. J. Hum. Genet.">
        <title>Maple syrup urine disease: the E1beta gene of human branched-chain alpha-ketoacid dehydrogenase complex has 11 rather than 10 exons, and the 3' UTR in one of the two E1beta mRNAs arises from intronic sequences.</title>
        <authorList>
            <person name="Chuang J.L."/>
            <person name="Cox R.P."/>
            <person name="Chuang D.T."/>
        </authorList>
    </citation>
    <scope>NUCLEOTIDE SEQUENCE [MRNA] (ISOFORM 1)</scope>
    <source>
        <tissue>Placenta</tissue>
    </source>
</reference>
<reference key="3">
    <citation type="journal article" date="2004" name="Nat. Genet.">
        <title>Complete sequencing and characterization of 21,243 full-length human cDNAs.</title>
        <authorList>
            <person name="Ota T."/>
            <person name="Suzuki Y."/>
            <person name="Nishikawa T."/>
            <person name="Otsuki T."/>
            <person name="Sugiyama T."/>
            <person name="Irie R."/>
            <person name="Wakamatsu A."/>
            <person name="Hayashi K."/>
            <person name="Sato H."/>
            <person name="Nagai K."/>
            <person name="Kimura K."/>
            <person name="Makita H."/>
            <person name="Sekine M."/>
            <person name="Obayashi M."/>
            <person name="Nishi T."/>
            <person name="Shibahara T."/>
            <person name="Tanaka T."/>
            <person name="Ishii S."/>
            <person name="Yamamoto J."/>
            <person name="Saito K."/>
            <person name="Kawai Y."/>
            <person name="Isono Y."/>
            <person name="Nakamura Y."/>
            <person name="Nagahari K."/>
            <person name="Murakami K."/>
            <person name="Yasuda T."/>
            <person name="Iwayanagi T."/>
            <person name="Wagatsuma M."/>
            <person name="Shiratori A."/>
            <person name="Sudo H."/>
            <person name="Hosoiri T."/>
            <person name="Kaku Y."/>
            <person name="Kodaira H."/>
            <person name="Kondo H."/>
            <person name="Sugawara M."/>
            <person name="Takahashi M."/>
            <person name="Kanda K."/>
            <person name="Yokoi T."/>
            <person name="Furuya T."/>
            <person name="Kikkawa E."/>
            <person name="Omura Y."/>
            <person name="Abe K."/>
            <person name="Kamihara K."/>
            <person name="Katsuta N."/>
            <person name="Sato K."/>
            <person name="Tanikawa M."/>
            <person name="Yamazaki M."/>
            <person name="Ninomiya K."/>
            <person name="Ishibashi T."/>
            <person name="Yamashita H."/>
            <person name="Murakawa K."/>
            <person name="Fujimori K."/>
            <person name="Tanai H."/>
            <person name="Kimata M."/>
            <person name="Watanabe M."/>
            <person name="Hiraoka S."/>
            <person name="Chiba Y."/>
            <person name="Ishida S."/>
            <person name="Ono Y."/>
            <person name="Takiguchi S."/>
            <person name="Watanabe S."/>
            <person name="Yosida M."/>
            <person name="Hotuta T."/>
            <person name="Kusano J."/>
            <person name="Kanehori K."/>
            <person name="Takahashi-Fujii A."/>
            <person name="Hara H."/>
            <person name="Tanase T.-O."/>
            <person name="Nomura Y."/>
            <person name="Togiya S."/>
            <person name="Komai F."/>
            <person name="Hara R."/>
            <person name="Takeuchi K."/>
            <person name="Arita M."/>
            <person name="Imose N."/>
            <person name="Musashino K."/>
            <person name="Yuuki H."/>
            <person name="Oshima A."/>
            <person name="Sasaki N."/>
            <person name="Aotsuka S."/>
            <person name="Yoshikawa Y."/>
            <person name="Matsunawa H."/>
            <person name="Ichihara T."/>
            <person name="Shiohata N."/>
            <person name="Sano S."/>
            <person name="Moriya S."/>
            <person name="Momiyama H."/>
            <person name="Satoh N."/>
            <person name="Takami S."/>
            <person name="Terashima Y."/>
            <person name="Suzuki O."/>
            <person name="Nakagawa S."/>
            <person name="Senoh A."/>
            <person name="Mizoguchi H."/>
            <person name="Goto Y."/>
            <person name="Shimizu F."/>
            <person name="Wakebe H."/>
            <person name="Hishigaki H."/>
            <person name="Watanabe T."/>
            <person name="Sugiyama A."/>
            <person name="Takemoto M."/>
            <person name="Kawakami B."/>
            <person name="Yamazaki M."/>
            <person name="Watanabe K."/>
            <person name="Kumagai A."/>
            <person name="Itakura S."/>
            <person name="Fukuzumi Y."/>
            <person name="Fujimori Y."/>
            <person name="Komiyama M."/>
            <person name="Tashiro H."/>
            <person name="Tanigami A."/>
            <person name="Fujiwara T."/>
            <person name="Ono T."/>
            <person name="Yamada K."/>
            <person name="Fujii Y."/>
            <person name="Ozaki K."/>
            <person name="Hirao M."/>
            <person name="Ohmori Y."/>
            <person name="Kawabata A."/>
            <person name="Hikiji T."/>
            <person name="Kobatake N."/>
            <person name="Inagaki H."/>
            <person name="Ikema Y."/>
            <person name="Okamoto S."/>
            <person name="Okitani R."/>
            <person name="Kawakami T."/>
            <person name="Noguchi S."/>
            <person name="Itoh T."/>
            <person name="Shigeta K."/>
            <person name="Senba T."/>
            <person name="Matsumura K."/>
            <person name="Nakajima Y."/>
            <person name="Mizuno T."/>
            <person name="Morinaga M."/>
            <person name="Sasaki M."/>
            <person name="Togashi T."/>
            <person name="Oyama M."/>
            <person name="Hata H."/>
            <person name="Watanabe M."/>
            <person name="Komatsu T."/>
            <person name="Mizushima-Sugano J."/>
            <person name="Satoh T."/>
            <person name="Shirai Y."/>
            <person name="Takahashi Y."/>
            <person name="Nakagawa K."/>
            <person name="Okumura K."/>
            <person name="Nagase T."/>
            <person name="Nomura N."/>
            <person name="Kikuchi H."/>
            <person name="Masuho Y."/>
            <person name="Yamashita R."/>
            <person name="Nakai K."/>
            <person name="Yada T."/>
            <person name="Nakamura Y."/>
            <person name="Ohara O."/>
            <person name="Isogai T."/>
            <person name="Sugano S."/>
        </authorList>
    </citation>
    <scope>NUCLEOTIDE SEQUENCE [LARGE SCALE MRNA] (ISOFORM 1)</scope>
    <source>
        <tissue>Hippocampus</tissue>
    </source>
</reference>
<reference key="4">
    <citation type="submission" date="2004-10" db="EMBL/GenBank/DDBJ databases">
        <title>Cloning of human full-length CDSs in BD Creator(TM) system donor vector.</title>
        <authorList>
            <person name="Kalnine N."/>
            <person name="Chen X."/>
            <person name="Rolfs A."/>
            <person name="Halleck A."/>
            <person name="Hines L."/>
            <person name="Eisenstein S."/>
            <person name="Koundinya M."/>
            <person name="Raphael J."/>
            <person name="Moreira D."/>
            <person name="Kelley T."/>
            <person name="LaBaer J."/>
            <person name="Lin Y."/>
            <person name="Phelan M."/>
            <person name="Farmer A."/>
        </authorList>
    </citation>
    <scope>NUCLEOTIDE SEQUENCE [LARGE SCALE MRNA] (ISOFORM 1)</scope>
</reference>
<reference key="5">
    <citation type="journal article" date="2003" name="Nature">
        <title>The DNA sequence and analysis of human chromosome 6.</title>
        <authorList>
            <person name="Mungall A.J."/>
            <person name="Palmer S.A."/>
            <person name="Sims S.K."/>
            <person name="Edwards C.A."/>
            <person name="Ashurst J.L."/>
            <person name="Wilming L."/>
            <person name="Jones M.C."/>
            <person name="Horton R."/>
            <person name="Hunt S.E."/>
            <person name="Scott C.E."/>
            <person name="Gilbert J.G.R."/>
            <person name="Clamp M.E."/>
            <person name="Bethel G."/>
            <person name="Milne S."/>
            <person name="Ainscough R."/>
            <person name="Almeida J.P."/>
            <person name="Ambrose K.D."/>
            <person name="Andrews T.D."/>
            <person name="Ashwell R.I.S."/>
            <person name="Babbage A.K."/>
            <person name="Bagguley C.L."/>
            <person name="Bailey J."/>
            <person name="Banerjee R."/>
            <person name="Barker D.J."/>
            <person name="Barlow K.F."/>
            <person name="Bates K."/>
            <person name="Beare D.M."/>
            <person name="Beasley H."/>
            <person name="Beasley O."/>
            <person name="Bird C.P."/>
            <person name="Blakey S.E."/>
            <person name="Bray-Allen S."/>
            <person name="Brook J."/>
            <person name="Brown A.J."/>
            <person name="Brown J.Y."/>
            <person name="Burford D.C."/>
            <person name="Burrill W."/>
            <person name="Burton J."/>
            <person name="Carder C."/>
            <person name="Carter N.P."/>
            <person name="Chapman J.C."/>
            <person name="Clark S.Y."/>
            <person name="Clark G."/>
            <person name="Clee C.M."/>
            <person name="Clegg S."/>
            <person name="Cobley V."/>
            <person name="Collier R.E."/>
            <person name="Collins J.E."/>
            <person name="Colman L.K."/>
            <person name="Corby N.R."/>
            <person name="Coville G.J."/>
            <person name="Culley K.M."/>
            <person name="Dhami P."/>
            <person name="Davies J."/>
            <person name="Dunn M."/>
            <person name="Earthrowl M.E."/>
            <person name="Ellington A.E."/>
            <person name="Evans K.A."/>
            <person name="Faulkner L."/>
            <person name="Francis M.D."/>
            <person name="Frankish A."/>
            <person name="Frankland J."/>
            <person name="French L."/>
            <person name="Garner P."/>
            <person name="Garnett J."/>
            <person name="Ghori M.J."/>
            <person name="Gilby L.M."/>
            <person name="Gillson C.J."/>
            <person name="Glithero R.J."/>
            <person name="Grafham D.V."/>
            <person name="Grant M."/>
            <person name="Gribble S."/>
            <person name="Griffiths C."/>
            <person name="Griffiths M.N.D."/>
            <person name="Hall R."/>
            <person name="Halls K.S."/>
            <person name="Hammond S."/>
            <person name="Harley J.L."/>
            <person name="Hart E.A."/>
            <person name="Heath P.D."/>
            <person name="Heathcott R."/>
            <person name="Holmes S.J."/>
            <person name="Howden P.J."/>
            <person name="Howe K.L."/>
            <person name="Howell G.R."/>
            <person name="Huckle E."/>
            <person name="Humphray S.J."/>
            <person name="Humphries M.D."/>
            <person name="Hunt A.R."/>
            <person name="Johnson C.M."/>
            <person name="Joy A.A."/>
            <person name="Kay M."/>
            <person name="Keenan S.J."/>
            <person name="Kimberley A.M."/>
            <person name="King A."/>
            <person name="Laird G.K."/>
            <person name="Langford C."/>
            <person name="Lawlor S."/>
            <person name="Leongamornlert D.A."/>
            <person name="Leversha M."/>
            <person name="Lloyd C.R."/>
            <person name="Lloyd D.M."/>
            <person name="Loveland J.E."/>
            <person name="Lovell J."/>
            <person name="Martin S."/>
            <person name="Mashreghi-Mohammadi M."/>
            <person name="Maslen G.L."/>
            <person name="Matthews L."/>
            <person name="McCann O.T."/>
            <person name="McLaren S.J."/>
            <person name="McLay K."/>
            <person name="McMurray A."/>
            <person name="Moore M.J.F."/>
            <person name="Mullikin J.C."/>
            <person name="Niblett D."/>
            <person name="Nickerson T."/>
            <person name="Novik K.L."/>
            <person name="Oliver K."/>
            <person name="Overton-Larty E.K."/>
            <person name="Parker A."/>
            <person name="Patel R."/>
            <person name="Pearce A.V."/>
            <person name="Peck A.I."/>
            <person name="Phillimore B.J.C.T."/>
            <person name="Phillips S."/>
            <person name="Plumb R.W."/>
            <person name="Porter K.M."/>
            <person name="Ramsey Y."/>
            <person name="Ranby S.A."/>
            <person name="Rice C.M."/>
            <person name="Ross M.T."/>
            <person name="Searle S.M."/>
            <person name="Sehra H.K."/>
            <person name="Sheridan E."/>
            <person name="Skuce C.D."/>
            <person name="Smith S."/>
            <person name="Smith M."/>
            <person name="Spraggon L."/>
            <person name="Squares S.L."/>
            <person name="Steward C.A."/>
            <person name="Sycamore N."/>
            <person name="Tamlyn-Hall G."/>
            <person name="Tester J."/>
            <person name="Theaker A.J."/>
            <person name="Thomas D.W."/>
            <person name="Thorpe A."/>
            <person name="Tracey A."/>
            <person name="Tromans A."/>
            <person name="Tubby B."/>
            <person name="Wall M."/>
            <person name="Wallis J.M."/>
            <person name="West A.P."/>
            <person name="White S.S."/>
            <person name="Whitehead S.L."/>
            <person name="Whittaker H."/>
            <person name="Wild A."/>
            <person name="Willey D.J."/>
            <person name="Wilmer T.E."/>
            <person name="Wood J.M."/>
            <person name="Wray P.W."/>
            <person name="Wyatt J.C."/>
            <person name="Young L."/>
            <person name="Younger R.M."/>
            <person name="Bentley D.R."/>
            <person name="Coulson A."/>
            <person name="Durbin R.M."/>
            <person name="Hubbard T."/>
            <person name="Sulston J.E."/>
            <person name="Dunham I."/>
            <person name="Rogers J."/>
            <person name="Beck S."/>
        </authorList>
    </citation>
    <scope>NUCLEOTIDE SEQUENCE [LARGE SCALE GENOMIC DNA]</scope>
</reference>
<reference key="6">
    <citation type="submission" date="2005-09" db="EMBL/GenBank/DDBJ databases">
        <authorList>
            <person name="Mural R.J."/>
            <person name="Istrail S."/>
            <person name="Sutton G."/>
            <person name="Florea L."/>
            <person name="Halpern A.L."/>
            <person name="Mobarry C.M."/>
            <person name="Lippert R."/>
            <person name="Walenz B."/>
            <person name="Shatkay H."/>
            <person name="Dew I."/>
            <person name="Miller J.R."/>
            <person name="Flanigan M.J."/>
            <person name="Edwards N.J."/>
            <person name="Bolanos R."/>
            <person name="Fasulo D."/>
            <person name="Halldorsson B.V."/>
            <person name="Hannenhalli S."/>
            <person name="Turner R."/>
            <person name="Yooseph S."/>
            <person name="Lu F."/>
            <person name="Nusskern D.R."/>
            <person name="Shue B.C."/>
            <person name="Zheng X.H."/>
            <person name="Zhong F."/>
            <person name="Delcher A.L."/>
            <person name="Huson D.H."/>
            <person name="Kravitz S.A."/>
            <person name="Mouchard L."/>
            <person name="Reinert K."/>
            <person name="Remington K.A."/>
            <person name="Clark A.G."/>
            <person name="Waterman M.S."/>
            <person name="Eichler E.E."/>
            <person name="Adams M.D."/>
            <person name="Hunkapiller M.W."/>
            <person name="Myers E.W."/>
            <person name="Venter J.C."/>
        </authorList>
    </citation>
    <scope>NUCLEOTIDE SEQUENCE [LARGE SCALE GENOMIC DNA]</scope>
</reference>
<reference key="7">
    <citation type="journal article" date="2004" name="Genome Res.">
        <title>The status, quality, and expansion of the NIH full-length cDNA project: the Mammalian Gene Collection (MGC).</title>
        <authorList>
            <consortium name="The MGC Project Team"/>
        </authorList>
    </citation>
    <scope>NUCLEOTIDE SEQUENCE [LARGE SCALE MRNA] (ISOFORMS 1 AND 2)</scope>
    <source>
        <tissue>Eye</tissue>
        <tissue>Testis</tissue>
    </source>
</reference>
<reference key="8">
    <citation type="journal article" date="1990" name="FEBS Lett.">
        <title>Molecular cloning of the mature E1b-beta subunit of human branched-chain alpha-keto acid dehydrogenase complex.</title>
        <authorList>
            <person name="Chuang J.L."/>
            <person name="Cox R.P."/>
            <person name="Chuang D.T."/>
        </authorList>
    </citation>
    <scope>NUCLEOTIDE SEQUENCE [MRNA] OF 20-392 (ISOFORM 1)</scope>
</reference>
<reference key="9">
    <citation type="journal article" date="1994" name="Biochim. Biophys. Acta">
        <title>Differential processing of human and rat E1 alpha precursors of the branched-chain alpha-keto acid dehydrogenase complex caused by an N-terminal proline in the rat sequence.</title>
        <authorList>
            <person name="Wynn R.M."/>
            <person name="Kochi H."/>
            <person name="Cox R.P."/>
            <person name="Chuang D.T."/>
        </authorList>
    </citation>
    <scope>PROTEIN SEQUENCE OF 36-62</scope>
</reference>
<reference key="10">
    <citation type="journal article" date="1998" name="J. Biol. Chem.">
        <title>Impaired assembly of E1 decarboxylase of the branched-chain alpha-ketoacid dehydrogenase complex in type IA maple syrup urine disease.</title>
        <authorList>
            <person name="Wynn R.M."/>
            <person name="Davie J.R."/>
            <person name="Chuang J.L."/>
            <person name="Cote C.D."/>
            <person name="Chuang D.T."/>
        </authorList>
    </citation>
    <scope>FUNCTION</scope>
    <scope>CATALYTIC ACTIVITY</scope>
    <scope>SUBUNIT</scope>
</reference>
<reference key="11">
    <citation type="journal article" date="2009" name="Science">
        <title>Lysine acetylation targets protein complexes and co-regulates major cellular functions.</title>
        <authorList>
            <person name="Choudhary C."/>
            <person name="Kumar C."/>
            <person name="Gnad F."/>
            <person name="Nielsen M.L."/>
            <person name="Rehman M."/>
            <person name="Walther T.C."/>
            <person name="Olsen J.V."/>
            <person name="Mann M."/>
        </authorList>
    </citation>
    <scope>ACETYLATION [LARGE SCALE ANALYSIS] AT LYS-241</scope>
    <scope>IDENTIFICATION BY MASS SPECTROMETRY [LARGE SCALE ANALYSIS]</scope>
</reference>
<reference key="12">
    <citation type="journal article" date="2011" name="BMC Syst. Biol.">
        <title>Initial characterization of the human central proteome.</title>
        <authorList>
            <person name="Burkard T.R."/>
            <person name="Planyavsky M."/>
            <person name="Kaupe I."/>
            <person name="Breitwieser F.P."/>
            <person name="Buerckstuemmer T."/>
            <person name="Bennett K.L."/>
            <person name="Superti-Furga G."/>
            <person name="Colinge J."/>
        </authorList>
    </citation>
    <scope>IDENTIFICATION BY MASS SPECTROMETRY [LARGE SCALE ANALYSIS]</scope>
</reference>
<reference key="13">
    <citation type="journal article" date="2014" name="J. Proteomics">
        <title>An enzyme assisted RP-RPLC approach for in-depth analysis of human liver phosphoproteome.</title>
        <authorList>
            <person name="Bian Y."/>
            <person name="Song C."/>
            <person name="Cheng K."/>
            <person name="Dong M."/>
            <person name="Wang F."/>
            <person name="Huang J."/>
            <person name="Sun D."/>
            <person name="Wang L."/>
            <person name="Ye M."/>
            <person name="Zou H."/>
        </authorList>
    </citation>
    <scope>IDENTIFICATION BY MASS SPECTROMETRY [LARGE SCALE ANALYSIS]</scope>
    <source>
        <tissue>Liver</tissue>
    </source>
</reference>
<reference key="14">
    <citation type="journal article" date="2015" name="Proteomics">
        <title>N-terminome analysis of the human mitochondrial proteome.</title>
        <authorList>
            <person name="Vaca Jacome A.S."/>
            <person name="Rabilloud T."/>
            <person name="Schaeffer-Reiss C."/>
            <person name="Rompais M."/>
            <person name="Ayoub D."/>
            <person name="Lane L."/>
            <person name="Bairoch A."/>
            <person name="Van Dorsselaer A."/>
            <person name="Carapito C."/>
        </authorList>
    </citation>
    <scope>CLEAVAGE OF TRANSIT PEPTIDE [LARGE SCALE ANALYSIS] AFTER GLN-50</scope>
    <scope>IDENTIFICATION BY MASS SPECTROMETRY [LARGE SCALE ANALYSIS]</scope>
</reference>
<reference evidence="12" key="15">
    <citation type="journal article" date="2000" name="Structure">
        <title>Crystal structure of human branched-chain alpha-ketoacid dehydrogenase and the molecular basis of multienzyme complex deficiency in maple syrup urine disease.</title>
        <authorList>
            <person name="Aevarsson A."/>
            <person name="Chuang J.L."/>
            <person name="Wynn R.M."/>
            <person name="Turley S."/>
            <person name="Chuang D.T."/>
            <person name="Hol W.G.J."/>
        </authorList>
    </citation>
    <scope>X-RAY CRYSTALLOGRAPHY (2.70 ANGSTROMS) OF 51-392 IN COMPLEX WITH BCKDHA; THIAMINE PYROPHOSPHATE AND POTASSIUM IONS</scope>
    <scope>FUNCTION</scope>
    <scope>CATALYTIC ACTIVITY</scope>
    <scope>COFACTOR</scope>
    <scope>SUBUNIT</scope>
    <scope>SUBCELLULAR LOCATION</scope>
    <scope>VARIANT MSUD1B TYR-176</scope>
    <scope>CHARACTERIZATION OF VARIANT MSUD1B TYR-176 AND ARG-206</scope>
</reference>
<reference key="16">
    <citation type="journal article" date="1993" name="Biochim. Biophys. Acta">
        <title>Heterogeneity of mutations in maple syrup urine disease (MSUD): screening and identification of affected E1 alpha and E1 beta subunits of the branched-chain alpha-keto-acid dehydrogenase multienzyme complex.</title>
        <authorList>
            <person name="Nobukuni Y."/>
            <person name="Mitsubuchi H."/>
            <person name="Hayashida Y."/>
            <person name="Ohta K."/>
            <person name="Indo Y."/>
            <person name="Ichiba Y."/>
            <person name="Endo F."/>
            <person name="Matsuda I."/>
        </authorList>
    </citation>
    <scope>VARIANT MSUD1B ARG-206</scope>
</reference>
<reference key="17">
    <citation type="journal article" date="2001" name="Am. J. Hum. Genet.">
        <title>Maple syrup urine disease: identification and carrier-frequency determination of a novel founder mutation in the Ashkenazi Jewish population.</title>
        <authorList>
            <person name="Edelmann L."/>
            <person name="Wasserstein M.P."/>
            <person name="Kornreich R."/>
            <person name="Sansaricq C."/>
            <person name="Snyderman S.E."/>
            <person name="Diaz G.A."/>
        </authorList>
    </citation>
    <scope>VARIANTS MSUD1B PRO-183 AND SER-278</scope>
</reference>
<reference key="18">
    <citation type="journal article" date="2012" name="Gene">
        <title>Two novel mutations in the BCKDHB gene (R170H, Q346R) cause the classic form of maple syrup urine disease (MSUD).</title>
        <authorList>
            <person name="Wang Y.P."/>
            <person name="Qi M.L."/>
            <person name="Li T.T."/>
            <person name="Zhao Y.J."/>
        </authorList>
    </citation>
    <scope>VARIANTS MSUD1B HIS-170 AND ARG-346</scope>
</reference>
<comment type="function">
    <text evidence="2 6">Together with BCKDHA forms the heterotetrameric E1 subunit of the mitochondrial branched-chain alpha-ketoacid dehydrogenase (BCKD) complex. The BCKD complex catalyzes the multi-step oxidative decarboxylation of alpha-ketoacids derived from the branched-chain amino-acids valine, leucine and isoleucine producing CO2 and acyl-CoA which is subsequently utilized to produce energy. The E1 subunit catalyzes the first step with the decarboxylation of the alpha-ketoacid forming an enzyme-product intermediate. A reductive acylation mediated by the lipoylamide cofactor of E2 extracts the acyl group from the E1 active site for the next step of the reaction.</text>
</comment>
<comment type="catalytic activity">
    <reaction evidence="2 6">
        <text>N(6)-[(R)-lipoyl]-L-lysyl-[protein] + 3-methyl-2-oxobutanoate + H(+) = N(6)-[(R)-S(8)-2-methylpropanoyldihydrolipoyl]-L-lysyl-[protein] + CO2</text>
        <dbReference type="Rhea" id="RHEA:13457"/>
        <dbReference type="Rhea" id="RHEA-COMP:10474"/>
        <dbReference type="Rhea" id="RHEA-COMP:10497"/>
        <dbReference type="ChEBI" id="CHEBI:11851"/>
        <dbReference type="ChEBI" id="CHEBI:15378"/>
        <dbReference type="ChEBI" id="CHEBI:16526"/>
        <dbReference type="ChEBI" id="CHEBI:83099"/>
        <dbReference type="ChEBI" id="CHEBI:83142"/>
        <dbReference type="EC" id="1.2.4.4"/>
    </reaction>
    <physiologicalReaction direction="left-to-right" evidence="10">
        <dbReference type="Rhea" id="RHEA:13458"/>
    </physiologicalReaction>
</comment>
<comment type="cofactor">
    <cofactor evidence="2">
        <name>thiamine diphosphate</name>
        <dbReference type="ChEBI" id="CHEBI:58937"/>
    </cofactor>
</comment>
<comment type="subunit">
    <text evidence="2 6 7">Heterotetramer of 2 alpha/BCKDHA and 2 beta chains/BCKDHB that forms the branched-chain alpha-keto acid decarboxylase (E1) component of the BCKD complex (PubMed:10745006, PubMed:9582350). The branched-chain alpha-ketoacid dehydrogenase is a large complex composed of three major building blocks E1, E2 and E3. It is organized around E2, a 24-meric cubic core composed of DBT, to which are associated 6 to 12 copies of E1, and approximately 6 copies of the dehydrogenase E3, a DLD dimer (PubMed:10745006).</text>
</comment>
<comment type="interaction">
    <interactant intactId="EBI-1029067">
        <id>P21953</id>
    </interactant>
    <interactant intactId="EBI-1029053">
        <id>P12694</id>
        <label>BCKDHA</label>
    </interactant>
    <organismsDiffer>false</organismsDiffer>
    <experiments>15</experiments>
</comment>
<comment type="interaction">
    <interactant intactId="EBI-15489569">
        <id>P21953-1</id>
    </interactant>
    <interactant intactId="EBI-15489562">
        <id>P12694-1</id>
        <label>BCKDHA</label>
    </interactant>
    <organismsDiffer>false</organismsDiffer>
    <experiments>3</experiments>
</comment>
<comment type="subcellular location">
    <subcellularLocation>
        <location evidence="7">Mitochondrion matrix</location>
    </subcellularLocation>
</comment>
<comment type="alternative products">
    <event type="alternative splicing"/>
    <isoform>
        <id>P21953-1</id>
        <name>1</name>
        <sequence type="displayed"/>
    </isoform>
    <isoform>
        <id>P21953-2</id>
        <name>2</name>
        <sequence type="described" ref="VSP_056370 VSP_056371"/>
    </isoform>
</comment>
<comment type="disease" evidence="2 3 4 5">
    <disease id="DI-01937">
        <name>Maple syrup urine disease 1B</name>
        <acronym>MSUD1B</acronym>
        <description>A form of maple syrup urine disease, an autosomal recessive metabolic disorder due to an enzyme defect in the catabolic pathway of the branched-chain amino acids leucine, isoleucine, and valine. Accumulation of these 3 amino acids and their corresponding keto acids leads to encephalopathy and progressive neurodegeneration. Clinical features include mental and physical retardation, feeding problems, and a maple syrup odor to the urine. The keto acids of the branched-chain amino acids are present in the urine. If untreated, maple syrup urine disease can lead to seizures, coma, and death. The disease is often classified by its pattern of signs and symptoms. The most common and severe form of the disease is the classic type, which becomes apparent soon after birth. Variant forms of the disorder become apparent later in infancy or childhood and are typically milder, but they still involve developmental delay and other medical problems if not treated.</description>
        <dbReference type="MIM" id="620698"/>
    </disease>
    <text>The disease is caused by variants affecting the gene represented in this entry.</text>
</comment>
<keyword id="KW-0002">3D-structure</keyword>
<keyword id="KW-0007">Acetylation</keyword>
<keyword id="KW-0025">Alternative splicing</keyword>
<keyword id="KW-0903">Direct protein sequencing</keyword>
<keyword id="KW-0225">Disease variant</keyword>
<keyword id="KW-0443">Lipid metabolism</keyword>
<keyword id="KW-0466">Maple syrup urine disease</keyword>
<keyword id="KW-0496">Mitochondrion</keyword>
<keyword id="KW-0560">Oxidoreductase</keyword>
<keyword id="KW-1267">Proteomics identification</keyword>
<keyword id="KW-1185">Reference proteome</keyword>
<keyword id="KW-0809">Transit peptide</keyword>
<dbReference type="EC" id="1.2.4.4" evidence="2 6"/>
<dbReference type="EMBL" id="M55575">
    <property type="protein sequence ID" value="AAA51812.1"/>
    <property type="molecule type" value="mRNA"/>
</dbReference>
<dbReference type="EMBL" id="D90391">
    <property type="protein sequence ID" value="BAA14389.1"/>
    <property type="molecule type" value="Genomic_DNA"/>
</dbReference>
<dbReference type="EMBL" id="AK289977">
    <property type="protein sequence ID" value="BAF82666.1"/>
    <property type="molecule type" value="mRNA"/>
</dbReference>
<dbReference type="EMBL" id="BT020063">
    <property type="protein sequence ID" value="AAV38866.1"/>
    <property type="molecule type" value="mRNA"/>
</dbReference>
<dbReference type="EMBL" id="AL049696">
    <property type="status" value="NOT_ANNOTATED_CDS"/>
    <property type="molecule type" value="Genomic_DNA"/>
</dbReference>
<dbReference type="EMBL" id="AL391595">
    <property type="status" value="NOT_ANNOTATED_CDS"/>
    <property type="molecule type" value="Genomic_DNA"/>
</dbReference>
<dbReference type="EMBL" id="CH471051">
    <property type="protein sequence ID" value="EAW48696.1"/>
    <property type="molecule type" value="Genomic_DNA"/>
</dbReference>
<dbReference type="EMBL" id="CH471051">
    <property type="protein sequence ID" value="EAW48697.1"/>
    <property type="molecule type" value="Genomic_DNA"/>
</dbReference>
<dbReference type="EMBL" id="CH471051">
    <property type="protein sequence ID" value="EAW48698.1"/>
    <property type="molecule type" value="Genomic_DNA"/>
</dbReference>
<dbReference type="EMBL" id="BC034481">
    <property type="protein sequence ID" value="AAH34481.1"/>
    <property type="molecule type" value="mRNA"/>
</dbReference>
<dbReference type="EMBL" id="BC040139">
    <property type="protein sequence ID" value="AAH40139.1"/>
    <property type="molecule type" value="mRNA"/>
</dbReference>
<dbReference type="EMBL" id="U50708">
    <property type="protein sequence ID" value="AAB16763.1"/>
    <property type="molecule type" value="mRNA"/>
</dbReference>
<dbReference type="EMBL" id="X52446">
    <property type="protein sequence ID" value="CAA36685.1"/>
    <property type="molecule type" value="mRNA"/>
</dbReference>
<dbReference type="CCDS" id="CCDS4994.1">
    <molecule id="P21953-1"/>
</dbReference>
<dbReference type="PIR" id="A37157">
    <property type="entry name" value="A37157"/>
</dbReference>
<dbReference type="RefSeq" id="NP_000047.1">
    <molecule id="P21953-1"/>
    <property type="nucleotide sequence ID" value="NM_000056.5"/>
</dbReference>
<dbReference type="RefSeq" id="NP_001305904.1">
    <property type="nucleotide sequence ID" value="NM_001318975.1"/>
</dbReference>
<dbReference type="RefSeq" id="NP_001410965.1">
    <molecule id="P21953-1"/>
    <property type="nucleotide sequence ID" value="NM_001424036.1"/>
</dbReference>
<dbReference type="RefSeq" id="NP_898871.1">
    <molecule id="P21953-1"/>
    <property type="nucleotide sequence ID" value="NM_183050.4"/>
</dbReference>
<dbReference type="RefSeq" id="XP_047275163.1">
    <molecule id="P21953-1"/>
    <property type="nucleotide sequence ID" value="XM_047419207.1"/>
</dbReference>
<dbReference type="RefSeq" id="XP_054212115.1">
    <molecule id="P21953-1"/>
    <property type="nucleotide sequence ID" value="XM_054356140.1"/>
</dbReference>
<dbReference type="PDB" id="1DTW">
    <property type="method" value="X-ray"/>
    <property type="resolution" value="2.70 A"/>
    <property type="chains" value="B=51-392"/>
</dbReference>
<dbReference type="PDB" id="1OLS">
    <property type="method" value="X-ray"/>
    <property type="resolution" value="1.85 A"/>
    <property type="chains" value="B=51-392"/>
</dbReference>
<dbReference type="PDB" id="1OLU">
    <property type="method" value="X-ray"/>
    <property type="resolution" value="1.90 A"/>
    <property type="chains" value="B=51-392"/>
</dbReference>
<dbReference type="PDB" id="1OLX">
    <property type="method" value="X-ray"/>
    <property type="resolution" value="2.25 A"/>
    <property type="chains" value="B=51-392"/>
</dbReference>
<dbReference type="PDB" id="1U5B">
    <property type="method" value="X-ray"/>
    <property type="resolution" value="1.83 A"/>
    <property type="chains" value="B=51-392"/>
</dbReference>
<dbReference type="PDB" id="1V11">
    <property type="method" value="X-ray"/>
    <property type="resolution" value="1.95 A"/>
    <property type="chains" value="B=51-392"/>
</dbReference>
<dbReference type="PDB" id="1V16">
    <property type="method" value="X-ray"/>
    <property type="resolution" value="1.90 A"/>
    <property type="chains" value="B=51-392"/>
</dbReference>
<dbReference type="PDB" id="1V1M">
    <property type="method" value="X-ray"/>
    <property type="resolution" value="2.00 A"/>
    <property type="chains" value="B=51-392"/>
</dbReference>
<dbReference type="PDB" id="1V1R">
    <property type="method" value="X-ray"/>
    <property type="resolution" value="1.80 A"/>
    <property type="chains" value="B=51-392"/>
</dbReference>
<dbReference type="PDB" id="1WCI">
    <property type="method" value="X-ray"/>
    <property type="resolution" value="1.84 A"/>
    <property type="chains" value="B=51-392"/>
</dbReference>
<dbReference type="PDB" id="1X7W">
    <property type="method" value="X-ray"/>
    <property type="resolution" value="1.73 A"/>
    <property type="chains" value="B=51-392"/>
</dbReference>
<dbReference type="PDB" id="1X7X">
    <property type="method" value="X-ray"/>
    <property type="resolution" value="2.10 A"/>
    <property type="chains" value="B=51-392"/>
</dbReference>
<dbReference type="PDB" id="1X7Y">
    <property type="method" value="X-ray"/>
    <property type="resolution" value="1.57 A"/>
    <property type="chains" value="B=51-392"/>
</dbReference>
<dbReference type="PDB" id="1X7Z">
    <property type="method" value="X-ray"/>
    <property type="resolution" value="1.72 A"/>
    <property type="chains" value="B=51-392"/>
</dbReference>
<dbReference type="PDB" id="1X80">
    <property type="method" value="X-ray"/>
    <property type="resolution" value="2.00 A"/>
    <property type="chains" value="B=51-392"/>
</dbReference>
<dbReference type="PDB" id="2BEU">
    <property type="method" value="X-ray"/>
    <property type="resolution" value="1.89 A"/>
    <property type="chains" value="B=51-392"/>
</dbReference>
<dbReference type="PDB" id="2BEV">
    <property type="method" value="X-ray"/>
    <property type="resolution" value="1.80 A"/>
    <property type="chains" value="B=51-392"/>
</dbReference>
<dbReference type="PDB" id="2BEW">
    <property type="method" value="X-ray"/>
    <property type="resolution" value="1.79 A"/>
    <property type="chains" value="B=51-392"/>
</dbReference>
<dbReference type="PDB" id="2BFB">
    <property type="method" value="X-ray"/>
    <property type="resolution" value="1.77 A"/>
    <property type="chains" value="B=51-392"/>
</dbReference>
<dbReference type="PDB" id="2BFC">
    <property type="method" value="X-ray"/>
    <property type="resolution" value="1.64 A"/>
    <property type="chains" value="B=51-392"/>
</dbReference>
<dbReference type="PDB" id="2BFD">
    <property type="method" value="X-ray"/>
    <property type="resolution" value="1.39 A"/>
    <property type="chains" value="B=51-392"/>
</dbReference>
<dbReference type="PDB" id="2BFE">
    <property type="method" value="X-ray"/>
    <property type="resolution" value="1.69 A"/>
    <property type="chains" value="B=51-392"/>
</dbReference>
<dbReference type="PDB" id="2BFF">
    <property type="method" value="X-ray"/>
    <property type="resolution" value="1.46 A"/>
    <property type="chains" value="B=51-392"/>
</dbReference>
<dbReference type="PDB" id="2J9F">
    <property type="method" value="X-ray"/>
    <property type="resolution" value="1.88 A"/>
    <property type="chains" value="B/D=51-392"/>
</dbReference>
<dbReference type="PDBsum" id="1DTW"/>
<dbReference type="PDBsum" id="1OLS"/>
<dbReference type="PDBsum" id="1OLU"/>
<dbReference type="PDBsum" id="1OLX"/>
<dbReference type="PDBsum" id="1U5B"/>
<dbReference type="PDBsum" id="1V11"/>
<dbReference type="PDBsum" id="1V16"/>
<dbReference type="PDBsum" id="1V1M"/>
<dbReference type="PDBsum" id="1V1R"/>
<dbReference type="PDBsum" id="1WCI"/>
<dbReference type="PDBsum" id="1X7W"/>
<dbReference type="PDBsum" id="1X7X"/>
<dbReference type="PDBsum" id="1X7Y"/>
<dbReference type="PDBsum" id="1X7Z"/>
<dbReference type="PDBsum" id="1X80"/>
<dbReference type="PDBsum" id="2BEU"/>
<dbReference type="PDBsum" id="2BEV"/>
<dbReference type="PDBsum" id="2BEW"/>
<dbReference type="PDBsum" id="2BFB"/>
<dbReference type="PDBsum" id="2BFC"/>
<dbReference type="PDBsum" id="2BFD"/>
<dbReference type="PDBsum" id="2BFE"/>
<dbReference type="PDBsum" id="2BFF"/>
<dbReference type="PDBsum" id="2J9F"/>
<dbReference type="SMR" id="P21953"/>
<dbReference type="BioGRID" id="107066">
    <property type="interactions" value="78"/>
</dbReference>
<dbReference type="ComplexPortal" id="CPX-2216">
    <property type="entry name" value="Mitochondrial 2-oxoisovalerate dehydrogenase complex"/>
</dbReference>
<dbReference type="DIP" id="DIP-6147N"/>
<dbReference type="FunCoup" id="P21953">
    <property type="interactions" value="1093"/>
</dbReference>
<dbReference type="IntAct" id="P21953">
    <property type="interactions" value="34"/>
</dbReference>
<dbReference type="MINT" id="P21953"/>
<dbReference type="STRING" id="9606.ENSP00000318351"/>
<dbReference type="ChEMBL" id="CHEMBL5465287"/>
<dbReference type="GlyGen" id="P21953">
    <property type="glycosylation" value="1 site, 1 O-linked glycan (1 site)"/>
</dbReference>
<dbReference type="iPTMnet" id="P21953"/>
<dbReference type="PhosphoSitePlus" id="P21953"/>
<dbReference type="SwissPalm" id="P21953"/>
<dbReference type="BioMuta" id="BCKDHB"/>
<dbReference type="DMDM" id="129034"/>
<dbReference type="REPRODUCTION-2DPAGE" id="IPI00011276"/>
<dbReference type="jPOST" id="P21953"/>
<dbReference type="MassIVE" id="P21953"/>
<dbReference type="PaxDb" id="9606-ENSP00000318351"/>
<dbReference type="PeptideAtlas" id="P21953"/>
<dbReference type="ProteomicsDB" id="53944">
    <molecule id="P21953-1"/>
</dbReference>
<dbReference type="ProteomicsDB" id="64342"/>
<dbReference type="Pumba" id="P21953"/>
<dbReference type="TopDownProteomics" id="P21953-1">
    <molecule id="P21953-1"/>
</dbReference>
<dbReference type="Antibodypedia" id="49986">
    <property type="antibodies" value="104 antibodies from 22 providers"/>
</dbReference>
<dbReference type="DNASU" id="594"/>
<dbReference type="Ensembl" id="ENST00000320393.9">
    <molecule id="P21953-1"/>
    <property type="protein sequence ID" value="ENSP00000318351.5"/>
    <property type="gene ID" value="ENSG00000083123.15"/>
</dbReference>
<dbReference type="Ensembl" id="ENST00000356489.9">
    <molecule id="P21953-1"/>
    <property type="protein sequence ID" value="ENSP00000348880.5"/>
    <property type="gene ID" value="ENSG00000083123.15"/>
</dbReference>
<dbReference type="Ensembl" id="ENST00000369760.8">
    <molecule id="P21953-2"/>
    <property type="protein sequence ID" value="ENSP00000358775.4"/>
    <property type="gene ID" value="ENSG00000083123.15"/>
</dbReference>
<dbReference type="GeneID" id="594"/>
<dbReference type="KEGG" id="hsa:594"/>
<dbReference type="MANE-Select" id="ENST00000320393.9">
    <property type="protein sequence ID" value="ENSP00000318351.5"/>
    <property type="RefSeq nucleotide sequence ID" value="NM_183050.4"/>
    <property type="RefSeq protein sequence ID" value="NP_898871.1"/>
</dbReference>
<dbReference type="UCSC" id="uc003pjd.3">
    <molecule id="P21953-1"/>
    <property type="organism name" value="human"/>
</dbReference>
<dbReference type="AGR" id="HGNC:987"/>
<dbReference type="CTD" id="594"/>
<dbReference type="DisGeNET" id="594"/>
<dbReference type="GeneCards" id="BCKDHB"/>
<dbReference type="GeneReviews" id="BCKDHB"/>
<dbReference type="HGNC" id="HGNC:987">
    <property type="gene designation" value="BCKDHB"/>
</dbReference>
<dbReference type="HPA" id="ENSG00000083123">
    <property type="expression patterns" value="Tissue enhanced (liver)"/>
</dbReference>
<dbReference type="MalaCards" id="BCKDHB"/>
<dbReference type="MIM" id="248600">
    <property type="type" value="phenotype"/>
</dbReference>
<dbReference type="MIM" id="248611">
    <property type="type" value="gene"/>
</dbReference>
<dbReference type="MIM" id="620698">
    <property type="type" value="phenotype"/>
</dbReference>
<dbReference type="neXtProt" id="NX_P21953"/>
<dbReference type="OpenTargets" id="ENSG00000083123"/>
<dbReference type="Orphanet" id="268145">
    <property type="disease" value="Classic maple syrup urine disease"/>
</dbReference>
<dbReference type="Orphanet" id="268162">
    <property type="disease" value="Intermediate maple syrup urine disease"/>
</dbReference>
<dbReference type="Orphanet" id="268173">
    <property type="disease" value="Intermittent maple syrup urine disease"/>
</dbReference>
<dbReference type="PharmGKB" id="PA25298"/>
<dbReference type="VEuPathDB" id="HostDB:ENSG00000083123"/>
<dbReference type="eggNOG" id="KOG0525">
    <property type="taxonomic scope" value="Eukaryota"/>
</dbReference>
<dbReference type="GeneTree" id="ENSGT00940000156533"/>
<dbReference type="HOGENOM" id="CLU_012907_1_5_1"/>
<dbReference type="InParanoid" id="P21953"/>
<dbReference type="OMA" id="SEAYYMA"/>
<dbReference type="OrthoDB" id="878at2759"/>
<dbReference type="PAN-GO" id="P21953">
    <property type="GO annotations" value="3 GO annotations based on evolutionary models"/>
</dbReference>
<dbReference type="PhylomeDB" id="P21953"/>
<dbReference type="TreeFam" id="TF105947"/>
<dbReference type="BioCyc" id="MetaCyc:MONOMER-12006"/>
<dbReference type="PathwayCommons" id="P21953"/>
<dbReference type="Reactome" id="R-HSA-70895">
    <property type="pathway name" value="Branched-chain amino acid catabolism"/>
</dbReference>
<dbReference type="Reactome" id="R-HSA-9859138">
    <property type="pathway name" value="BCKDH synthesizes BCAA-CoA from KIC, KMVA, KIV"/>
</dbReference>
<dbReference type="Reactome" id="R-HSA-9865113">
    <property type="pathway name" value="Loss-of-function mutations in DBT cause MSUD2"/>
</dbReference>
<dbReference type="Reactome" id="R-HSA-9865125">
    <property type="pathway name" value="Loss-of-function mutations in BCKDHA or BCKDHB cause MSUD"/>
</dbReference>
<dbReference type="Reactome" id="R-HSA-9907570">
    <property type="pathway name" value="Loss-of-function mutations in DLD cause MSUD3/DLDD"/>
</dbReference>
<dbReference type="Reactome" id="R-HSA-9912481">
    <property type="pathway name" value="Branched-chain ketoacid dehydrogenase kinase deficiency"/>
</dbReference>
<dbReference type="Reactome" id="R-HSA-9912529">
    <property type="pathway name" value="H139Hfs13* PPM1K causes a mild variant of MSUD"/>
</dbReference>
<dbReference type="SABIO-RK" id="P21953"/>
<dbReference type="SignaLink" id="P21953"/>
<dbReference type="BioGRID-ORCS" id="594">
    <property type="hits" value="14 hits in 1158 CRISPR screens"/>
</dbReference>
<dbReference type="ChiTaRS" id="BCKDHB">
    <property type="organism name" value="human"/>
</dbReference>
<dbReference type="EvolutionaryTrace" id="P21953"/>
<dbReference type="GeneWiki" id="BCKDHB"/>
<dbReference type="GenomeRNAi" id="594"/>
<dbReference type="Pharos" id="P21953">
    <property type="development level" value="Tbio"/>
</dbReference>
<dbReference type="PRO" id="PR:P21953"/>
<dbReference type="Proteomes" id="UP000005640">
    <property type="component" value="Chromosome 6"/>
</dbReference>
<dbReference type="RNAct" id="P21953">
    <property type="molecule type" value="protein"/>
</dbReference>
<dbReference type="Bgee" id="ENSG00000083123">
    <property type="expression patterns" value="Expressed in right lobe of liver and 166 other cell types or tissues"/>
</dbReference>
<dbReference type="ExpressionAtlas" id="P21953">
    <property type="expression patterns" value="baseline and differential"/>
</dbReference>
<dbReference type="GO" id="GO:0160157">
    <property type="term" value="C:branched-chain alpha-ketoacid dehydrogenase complex"/>
    <property type="evidence" value="ECO:0000314"/>
    <property type="project" value="UniProtKB"/>
</dbReference>
<dbReference type="GO" id="GO:0005759">
    <property type="term" value="C:mitochondrial matrix"/>
    <property type="evidence" value="ECO:0000304"/>
    <property type="project" value="Reactome"/>
</dbReference>
<dbReference type="GO" id="GO:0005739">
    <property type="term" value="C:mitochondrion"/>
    <property type="evidence" value="ECO:0000314"/>
    <property type="project" value="HPA"/>
</dbReference>
<dbReference type="GO" id="GO:0005730">
    <property type="term" value="C:nucleolus"/>
    <property type="evidence" value="ECO:0000314"/>
    <property type="project" value="HPA"/>
</dbReference>
<dbReference type="GO" id="GO:0005654">
    <property type="term" value="C:nucleoplasm"/>
    <property type="evidence" value="ECO:0000314"/>
    <property type="project" value="HPA"/>
</dbReference>
<dbReference type="GO" id="GO:0003863">
    <property type="term" value="F:3-methyl-2-oxobutanoate dehydrogenase (2-methylpropanoyl-transferring) activity"/>
    <property type="evidence" value="ECO:0007669"/>
    <property type="project" value="UniProtKB-EC"/>
</dbReference>
<dbReference type="GO" id="GO:0009083">
    <property type="term" value="P:branched-chain amino acid catabolic process"/>
    <property type="evidence" value="ECO:0000314"/>
    <property type="project" value="ComplexPortal"/>
</dbReference>
<dbReference type="GO" id="GO:0006629">
    <property type="term" value="P:lipid metabolic process"/>
    <property type="evidence" value="ECO:0007669"/>
    <property type="project" value="UniProtKB-KW"/>
</dbReference>
<dbReference type="GO" id="GO:0007584">
    <property type="term" value="P:response to nutrient"/>
    <property type="evidence" value="ECO:0000318"/>
    <property type="project" value="GO_Central"/>
</dbReference>
<dbReference type="CDD" id="cd07036">
    <property type="entry name" value="TPP_PYR_E1-PDHc-beta_like"/>
    <property type="match status" value="1"/>
</dbReference>
<dbReference type="FunFam" id="3.40.50.920:FF:000004">
    <property type="entry name" value="2-oxoisovalerate dehydrogenase subunit beta 1, mitochondrial"/>
    <property type="match status" value="1"/>
</dbReference>
<dbReference type="FunFam" id="3.40.50.970:FF:000001">
    <property type="entry name" value="Pyruvate dehydrogenase E1 beta subunit"/>
    <property type="match status" value="1"/>
</dbReference>
<dbReference type="Gene3D" id="3.40.50.920">
    <property type="match status" value="1"/>
</dbReference>
<dbReference type="Gene3D" id="3.40.50.970">
    <property type="match status" value="1"/>
</dbReference>
<dbReference type="InterPro" id="IPR029061">
    <property type="entry name" value="THDP-binding"/>
</dbReference>
<dbReference type="InterPro" id="IPR009014">
    <property type="entry name" value="Transketo_C/PFOR_II"/>
</dbReference>
<dbReference type="InterPro" id="IPR005475">
    <property type="entry name" value="Transketolase-like_Pyr-bd"/>
</dbReference>
<dbReference type="InterPro" id="IPR033248">
    <property type="entry name" value="Transketolase_C"/>
</dbReference>
<dbReference type="PANTHER" id="PTHR42980:SF1">
    <property type="entry name" value="2-OXOISOVALERATE DEHYDROGENASE SUBUNIT BETA, MITOCHONDRIAL"/>
    <property type="match status" value="1"/>
</dbReference>
<dbReference type="PANTHER" id="PTHR42980">
    <property type="entry name" value="2-OXOISOVALERATE DEHYDROGENASE SUBUNIT BETA-RELATED"/>
    <property type="match status" value="1"/>
</dbReference>
<dbReference type="Pfam" id="PF02779">
    <property type="entry name" value="Transket_pyr"/>
    <property type="match status" value="1"/>
</dbReference>
<dbReference type="Pfam" id="PF02780">
    <property type="entry name" value="Transketolase_C"/>
    <property type="match status" value="1"/>
</dbReference>
<dbReference type="SMART" id="SM00861">
    <property type="entry name" value="Transket_pyr"/>
    <property type="match status" value="1"/>
</dbReference>
<dbReference type="SUPFAM" id="SSF52518">
    <property type="entry name" value="Thiamin diphosphate-binding fold (THDP-binding)"/>
    <property type="match status" value="1"/>
</dbReference>
<dbReference type="SUPFAM" id="SSF52922">
    <property type="entry name" value="TK C-terminal domain-like"/>
    <property type="match status" value="1"/>
</dbReference>
<proteinExistence type="evidence at protein level"/>
<protein>
    <recommendedName>
        <fullName evidence="10">2-oxoisovalerate dehydrogenase subunit beta, mitochondrial</fullName>
        <ecNumber evidence="2 6">1.2.4.4</ecNumber>
    </recommendedName>
    <alternativeName>
        <fullName>Branched-chain alpha-keto acid dehydrogenase E1 component beta chain</fullName>
        <shortName>BCKDE1B</shortName>
        <shortName>BCKDH E1-beta</shortName>
    </alternativeName>
</protein>
<gene>
    <name evidence="11" type="primary">BCKDHB</name>
</gene>
<sequence>MAVVAAAAGWLLRLRAAGAEGHWRRLPGAGLARGFLHPAATVEDAAQRRQVAHFTFQPDPEPREYGQTQKMNLFQSVTSALDNSLAKDPTAVIFGEDVAFGGVFRCTVGLRDKYGKDRVFNTPLCEQGIVGFGIGIAVTGATAIAEIQFADYIFPAFDQIVNEAAKYRYRSGDLFNCGSLTIRSPWGCVGHGALYHSQSPEAFFAHCPGIKVVIPRSPFQAKGLLLSCIEDKNPCIFFEPKILYRAAAEEVPIEPYNIPLSQAEVIQEGSDVTLVAWGTQVHVIREVASMAKEKLGVSCEVIDLRTIIPWDVDTICKSVIKTGRLLISHEAPLTGGFASEISSTVQEECFLNLEAPISRVCGYDTPFPHIFEPFYIPDKWKCYDALRKMINY</sequence>
<organism>
    <name type="scientific">Homo sapiens</name>
    <name type="common">Human</name>
    <dbReference type="NCBI Taxonomy" id="9606"/>
    <lineage>
        <taxon>Eukaryota</taxon>
        <taxon>Metazoa</taxon>
        <taxon>Chordata</taxon>
        <taxon>Craniata</taxon>
        <taxon>Vertebrata</taxon>
        <taxon>Euteleostomi</taxon>
        <taxon>Mammalia</taxon>
        <taxon>Eutheria</taxon>
        <taxon>Euarchontoglires</taxon>
        <taxon>Primates</taxon>
        <taxon>Haplorrhini</taxon>
        <taxon>Catarrhini</taxon>
        <taxon>Hominidae</taxon>
        <taxon>Homo</taxon>
    </lineage>
</organism>
<accession>P21953</accession>
<accession>Q5T2J3</accession>
<accession>Q9BQL0</accession>
<evidence type="ECO:0000250" key="1">
    <source>
        <dbReference type="UniProtKB" id="Q6P3A8"/>
    </source>
</evidence>
<evidence type="ECO:0000269" key="2">
    <source>
    </source>
</evidence>
<evidence type="ECO:0000269" key="3">
    <source>
    </source>
</evidence>
<evidence type="ECO:0000269" key="4">
    <source>
    </source>
</evidence>
<evidence type="ECO:0000269" key="5">
    <source>
    </source>
</evidence>
<evidence type="ECO:0000269" key="6">
    <source>
    </source>
</evidence>
<evidence type="ECO:0000303" key="7">
    <source>
    </source>
</evidence>
<evidence type="ECO:0000303" key="8">
    <source>
    </source>
</evidence>
<evidence type="ECO:0000305" key="9"/>
<evidence type="ECO:0000305" key="10">
    <source>
    </source>
</evidence>
<evidence type="ECO:0000312" key="11">
    <source>
        <dbReference type="HGNC" id="HGNC:987"/>
    </source>
</evidence>
<evidence type="ECO:0007744" key="12">
    <source>
        <dbReference type="PDB" id="1DTW"/>
    </source>
</evidence>
<evidence type="ECO:0007744" key="13">
    <source>
    </source>
</evidence>
<evidence type="ECO:0007744" key="14">
    <source>
    </source>
</evidence>
<evidence type="ECO:0007829" key="15">
    <source>
        <dbReference type="PDB" id="2BEW"/>
    </source>
</evidence>
<evidence type="ECO:0007829" key="16">
    <source>
        <dbReference type="PDB" id="2BFD"/>
    </source>
</evidence>
<feature type="transit peptide" description="Mitochondrion" evidence="14">
    <location>
        <begin position="1"/>
        <end position="50"/>
    </location>
</feature>
<feature type="chain" id="PRO_0000020470" description="2-oxoisovalerate dehydrogenase subunit beta, mitochondrial">
    <location>
        <begin position="51"/>
        <end position="392"/>
    </location>
</feature>
<feature type="binding site" evidence="2 12">
    <location>
        <position position="152"/>
    </location>
    <ligand>
        <name>thiamine diphosphate</name>
        <dbReference type="ChEBI" id="CHEBI:58937"/>
        <note>ligand shared with alpha subunit</note>
    </ligand>
</feature>
<feature type="binding site" evidence="2 12">
    <location>
        <position position="178"/>
    </location>
    <ligand>
        <name>K(+)</name>
        <dbReference type="ChEBI" id="CHEBI:29103"/>
        <note>structural</note>
    </ligand>
</feature>
<feature type="binding site" evidence="2 12">
    <location>
        <position position="180"/>
    </location>
    <ligand>
        <name>K(+)</name>
        <dbReference type="ChEBI" id="CHEBI:29103"/>
        <note>structural</note>
    </ligand>
</feature>
<feature type="binding site" evidence="2 12">
    <location>
        <position position="181"/>
    </location>
    <ligand>
        <name>K(+)</name>
        <dbReference type="ChEBI" id="CHEBI:29103"/>
        <note>structural</note>
    </ligand>
</feature>
<feature type="binding site" evidence="2 12">
    <location>
        <position position="228"/>
    </location>
    <ligand>
        <name>K(+)</name>
        <dbReference type="ChEBI" id="CHEBI:29103"/>
        <note>structural</note>
    </ligand>
</feature>
<feature type="binding site" evidence="2 12">
    <location>
        <position position="231"/>
    </location>
    <ligand>
        <name>K(+)</name>
        <dbReference type="ChEBI" id="CHEBI:29103"/>
        <note>structural</note>
    </ligand>
</feature>
<feature type="binding site" evidence="2 12">
    <location>
        <position position="233"/>
    </location>
    <ligand>
        <name>K(+)</name>
        <dbReference type="ChEBI" id="CHEBI:29103"/>
        <note>structural</note>
    </ligand>
</feature>
<feature type="modified residue" description="N6-acetyllysine" evidence="1">
    <location>
        <position position="232"/>
    </location>
</feature>
<feature type="modified residue" description="N6-acetyllysine" evidence="13">
    <location>
        <position position="241"/>
    </location>
</feature>
<feature type="splice variant" id="VSP_056370" description="In isoform 2." evidence="8">
    <original>VVIPRSP</original>
    <variation>IKVISLS</variation>
    <location>
        <begin position="212"/>
        <end position="218"/>
    </location>
</feature>
<feature type="splice variant" id="VSP_056371" description="In isoform 2." evidence="8">
    <location>
        <begin position="219"/>
        <end position="392"/>
    </location>
</feature>
<feature type="sequence variant" id="VAR_050437" description="In dbSNP:rs35470366.">
    <original>T</original>
    <variation>I</variation>
    <location>
        <position position="41"/>
    </location>
</feature>
<feature type="sequence variant" id="VAR_068348" description="In MSUD1B; dbSNP:rs371518124." evidence="4">
    <original>R</original>
    <variation>H</variation>
    <location>
        <position position="170"/>
    </location>
</feature>
<feature type="sequence variant" id="VAR_088297" description="In MSUD1B; uncertain significance; loss of 3-methyl-2-oxobutanoate dehydrogenase activity." evidence="2">
    <original>N</original>
    <variation>Y</variation>
    <location>
        <position position="176"/>
    </location>
</feature>
<feature type="sequence variant" id="VAR_024851" description="In MSUD1B; dbSNP:rs79761867." evidence="3">
    <original>R</original>
    <variation>P</variation>
    <location>
        <position position="183"/>
    </location>
</feature>
<feature type="sequence variant" id="VAR_004974" description="In MSUD1B; loss of 3-methyl-2-oxobutanoate dehydrogenase activity." evidence="2 5">
    <original>H</original>
    <variation>R</variation>
    <location>
        <position position="206"/>
    </location>
</feature>
<feature type="sequence variant" id="VAR_024852" description="In MSUD1B; dbSNP:rs386834233." evidence="3">
    <original>G</original>
    <variation>S</variation>
    <location>
        <position position="278"/>
    </location>
</feature>
<feature type="sequence variant" id="VAR_068349" description="In MSUD1B." evidence="4">
    <original>Q</original>
    <variation>R</variation>
    <location>
        <position position="346"/>
    </location>
</feature>
<feature type="sequence conflict" description="In Ref. 8." evidence="9" ref="8">
    <original>EGHW</original>
    <variation>RLPP</variation>
    <location>
        <begin position="20"/>
        <end position="23"/>
    </location>
</feature>
<feature type="sequence conflict" description="In Ref. 8; CAA36685." evidence="9" ref="8">
    <original>T</original>
    <variation>S</variation>
    <location>
        <position position="322"/>
    </location>
</feature>
<feature type="strand" evidence="16">
    <location>
        <begin position="68"/>
        <end position="71"/>
    </location>
</feature>
<feature type="helix" evidence="16">
    <location>
        <begin position="73"/>
        <end position="87"/>
    </location>
</feature>
<feature type="strand" evidence="16">
    <location>
        <begin position="92"/>
        <end position="95"/>
    </location>
</feature>
<feature type="turn" evidence="16">
    <location>
        <begin position="96"/>
        <end position="101"/>
    </location>
</feature>
<feature type="turn" evidence="16">
    <location>
        <begin position="106"/>
        <end position="109"/>
    </location>
</feature>
<feature type="helix" evidence="16">
    <location>
        <begin position="110"/>
        <end position="114"/>
    </location>
</feature>
<feature type="turn" evidence="16">
    <location>
        <begin position="116"/>
        <end position="118"/>
    </location>
</feature>
<feature type="strand" evidence="16">
    <location>
        <begin position="119"/>
        <end position="121"/>
    </location>
</feature>
<feature type="helix" evidence="16">
    <location>
        <begin position="126"/>
        <end position="138"/>
    </location>
</feature>
<feature type="strand" evidence="16">
    <location>
        <begin position="143"/>
        <end position="146"/>
    </location>
</feature>
<feature type="helix" evidence="16">
    <location>
        <begin position="150"/>
        <end position="152"/>
    </location>
</feature>
<feature type="helix" evidence="16">
    <location>
        <begin position="154"/>
        <end position="156"/>
    </location>
</feature>
<feature type="helix" evidence="16">
    <location>
        <begin position="157"/>
        <end position="161"/>
    </location>
</feature>
<feature type="helix" evidence="16">
    <location>
        <begin position="164"/>
        <end position="166"/>
    </location>
</feature>
<feature type="helix" evidence="16">
    <location>
        <begin position="167"/>
        <end position="170"/>
    </location>
</feature>
<feature type="turn" evidence="16">
    <location>
        <begin position="171"/>
        <end position="173"/>
    </location>
</feature>
<feature type="strand" evidence="16">
    <location>
        <begin position="180"/>
        <end position="187"/>
    </location>
</feature>
<feature type="helix" evidence="16">
    <location>
        <begin position="193"/>
        <end position="195"/>
    </location>
</feature>
<feature type="helix" evidence="16">
    <location>
        <begin position="201"/>
        <end position="205"/>
    </location>
</feature>
<feature type="strand" evidence="16">
    <location>
        <begin position="211"/>
        <end position="213"/>
    </location>
</feature>
<feature type="helix" evidence="16">
    <location>
        <begin position="218"/>
        <end position="230"/>
    </location>
</feature>
<feature type="strand" evidence="16">
    <location>
        <begin position="231"/>
        <end position="233"/>
    </location>
</feature>
<feature type="strand" evidence="16">
    <location>
        <begin position="235"/>
        <end position="240"/>
    </location>
</feature>
<feature type="helix" evidence="16">
    <location>
        <begin position="241"/>
        <end position="243"/>
    </location>
</feature>
<feature type="turn" evidence="15">
    <location>
        <begin position="244"/>
        <end position="246"/>
    </location>
</feature>
<feature type="strand" evidence="16">
    <location>
        <begin position="249"/>
        <end position="254"/>
    </location>
</feature>
<feature type="strand" evidence="16">
    <location>
        <begin position="264"/>
        <end position="267"/>
    </location>
</feature>
<feature type="strand" evidence="16">
    <location>
        <begin position="270"/>
        <end position="276"/>
    </location>
</feature>
<feature type="helix" evidence="16">
    <location>
        <begin position="280"/>
        <end position="295"/>
    </location>
</feature>
<feature type="strand" evidence="16">
    <location>
        <begin position="299"/>
        <end position="303"/>
    </location>
</feature>
<feature type="strand" evidence="16">
    <location>
        <begin position="306"/>
        <end position="309"/>
    </location>
</feature>
<feature type="helix" evidence="16">
    <location>
        <begin position="312"/>
        <end position="322"/>
    </location>
</feature>
<feature type="strand" evidence="16">
    <location>
        <begin position="325"/>
        <end position="333"/>
    </location>
</feature>
<feature type="helix" evidence="16">
    <location>
        <begin position="337"/>
        <end position="349"/>
    </location>
</feature>
<feature type="helix" evidence="16">
    <location>
        <begin position="350"/>
        <end position="352"/>
    </location>
</feature>
<feature type="strand" evidence="16">
    <location>
        <begin position="358"/>
        <end position="362"/>
    </location>
</feature>
<feature type="helix" evidence="16">
    <location>
        <begin position="372"/>
        <end position="375"/>
    </location>
</feature>
<feature type="helix" evidence="16">
    <location>
        <begin position="379"/>
        <end position="390"/>
    </location>
</feature>
<name>ODBB_HUMAN</name>